<accession>Q67KE1</accession>
<sequence>MAKKKCVLAYSGGLDTSVAIHWIKENYDADVVALAVDVGANDKDLEFIRQKALSIGAVKSYVYDARKEFAYDFILPTLQANACYESKYYLSAALSRPLIAKLLVQIAEEEGADFVAHGCTGKGNDQVRFEVSVAALNPNLQVLAPVREWGWSREEEIDYAQKHGIPVPVGKENPFSIDVNLWGRSCEAGVLEDPWAEAPEEAFEWTVNPKDAPDEPEYVEIGFEQGVPVSLNGEALDLVTLIERLHAIAGRHGVGRIDHVENRLVGIKSREVYEMPAAAVLTLAHKELETITLPRELHHFKLGLEQKYAELVYNGLWFHPLKEALDAFIKKSQETVTGTVRVRLFKGSAFCVGRTSPYTLYSYDLATYDKADKFDHKAAKGFIDIFGLPTKVYAAVQKSKA</sequence>
<gene>
    <name evidence="1" type="primary">argG</name>
    <name type="ordered locus">STH2874</name>
</gene>
<dbReference type="EC" id="6.3.4.5" evidence="1"/>
<dbReference type="EMBL" id="AP006840">
    <property type="protein sequence ID" value="BAD41857.1"/>
    <property type="molecule type" value="Genomic_DNA"/>
</dbReference>
<dbReference type="RefSeq" id="WP_011196991.1">
    <property type="nucleotide sequence ID" value="NC_006177.1"/>
</dbReference>
<dbReference type="SMR" id="Q67KE1"/>
<dbReference type="STRING" id="292459.STH2874"/>
<dbReference type="KEGG" id="sth:STH2874"/>
<dbReference type="eggNOG" id="COG0137">
    <property type="taxonomic scope" value="Bacteria"/>
</dbReference>
<dbReference type="HOGENOM" id="CLU_032784_4_2_9"/>
<dbReference type="OrthoDB" id="9801641at2"/>
<dbReference type="UniPathway" id="UPA00068">
    <property type="reaction ID" value="UER00113"/>
</dbReference>
<dbReference type="Proteomes" id="UP000000417">
    <property type="component" value="Chromosome"/>
</dbReference>
<dbReference type="GO" id="GO:0005737">
    <property type="term" value="C:cytoplasm"/>
    <property type="evidence" value="ECO:0007669"/>
    <property type="project" value="UniProtKB-SubCell"/>
</dbReference>
<dbReference type="GO" id="GO:0004055">
    <property type="term" value="F:argininosuccinate synthase activity"/>
    <property type="evidence" value="ECO:0007669"/>
    <property type="project" value="UniProtKB-UniRule"/>
</dbReference>
<dbReference type="GO" id="GO:0005524">
    <property type="term" value="F:ATP binding"/>
    <property type="evidence" value="ECO:0007669"/>
    <property type="project" value="UniProtKB-UniRule"/>
</dbReference>
<dbReference type="GO" id="GO:0000053">
    <property type="term" value="P:argininosuccinate metabolic process"/>
    <property type="evidence" value="ECO:0007669"/>
    <property type="project" value="TreeGrafter"/>
</dbReference>
<dbReference type="GO" id="GO:0006526">
    <property type="term" value="P:L-arginine biosynthetic process"/>
    <property type="evidence" value="ECO:0007669"/>
    <property type="project" value="UniProtKB-UniRule"/>
</dbReference>
<dbReference type="GO" id="GO:0000050">
    <property type="term" value="P:urea cycle"/>
    <property type="evidence" value="ECO:0007669"/>
    <property type="project" value="TreeGrafter"/>
</dbReference>
<dbReference type="CDD" id="cd01999">
    <property type="entry name" value="ASS"/>
    <property type="match status" value="1"/>
</dbReference>
<dbReference type="FunFam" id="1.20.5.470:FF:000002">
    <property type="entry name" value="Argininosuccinate synthase"/>
    <property type="match status" value="1"/>
</dbReference>
<dbReference type="FunFam" id="3.40.50.620:FF:000038">
    <property type="entry name" value="Argininosuccinate synthase"/>
    <property type="match status" value="1"/>
</dbReference>
<dbReference type="FunFam" id="3.90.1260.10:FF:000007">
    <property type="entry name" value="Argininosuccinate synthase"/>
    <property type="match status" value="1"/>
</dbReference>
<dbReference type="Gene3D" id="3.90.1260.10">
    <property type="entry name" value="Argininosuccinate synthetase, chain A, domain 2"/>
    <property type="match status" value="1"/>
</dbReference>
<dbReference type="Gene3D" id="3.40.50.620">
    <property type="entry name" value="HUPs"/>
    <property type="match status" value="1"/>
</dbReference>
<dbReference type="Gene3D" id="1.20.5.470">
    <property type="entry name" value="Single helix bin"/>
    <property type="match status" value="1"/>
</dbReference>
<dbReference type="HAMAP" id="MF_00005">
    <property type="entry name" value="Arg_succ_synth_type1"/>
    <property type="match status" value="1"/>
</dbReference>
<dbReference type="InterPro" id="IPR048268">
    <property type="entry name" value="Arginosuc_syn_C"/>
</dbReference>
<dbReference type="InterPro" id="IPR048267">
    <property type="entry name" value="Arginosuc_syn_N"/>
</dbReference>
<dbReference type="InterPro" id="IPR001518">
    <property type="entry name" value="Arginosuc_synth"/>
</dbReference>
<dbReference type="InterPro" id="IPR018223">
    <property type="entry name" value="Arginosuc_synth_CS"/>
</dbReference>
<dbReference type="InterPro" id="IPR023434">
    <property type="entry name" value="Arginosuc_synth_type_1_subfam"/>
</dbReference>
<dbReference type="InterPro" id="IPR024074">
    <property type="entry name" value="AS_cat/multimer_dom_body"/>
</dbReference>
<dbReference type="InterPro" id="IPR014729">
    <property type="entry name" value="Rossmann-like_a/b/a_fold"/>
</dbReference>
<dbReference type="NCBIfam" id="TIGR00032">
    <property type="entry name" value="argG"/>
    <property type="match status" value="1"/>
</dbReference>
<dbReference type="NCBIfam" id="NF001770">
    <property type="entry name" value="PRK00509.1"/>
    <property type="match status" value="1"/>
</dbReference>
<dbReference type="PANTHER" id="PTHR11587">
    <property type="entry name" value="ARGININOSUCCINATE SYNTHASE"/>
    <property type="match status" value="1"/>
</dbReference>
<dbReference type="PANTHER" id="PTHR11587:SF2">
    <property type="entry name" value="ARGININOSUCCINATE SYNTHASE"/>
    <property type="match status" value="1"/>
</dbReference>
<dbReference type="Pfam" id="PF20979">
    <property type="entry name" value="Arginosuc_syn_C"/>
    <property type="match status" value="1"/>
</dbReference>
<dbReference type="Pfam" id="PF00764">
    <property type="entry name" value="Arginosuc_synth"/>
    <property type="match status" value="1"/>
</dbReference>
<dbReference type="SUPFAM" id="SSF52402">
    <property type="entry name" value="Adenine nucleotide alpha hydrolases-like"/>
    <property type="match status" value="1"/>
</dbReference>
<dbReference type="SUPFAM" id="SSF69864">
    <property type="entry name" value="Argininosuccinate synthetase, C-terminal domain"/>
    <property type="match status" value="1"/>
</dbReference>
<dbReference type="PROSITE" id="PS00564">
    <property type="entry name" value="ARGININOSUCCIN_SYN_1"/>
    <property type="match status" value="1"/>
</dbReference>
<dbReference type="PROSITE" id="PS00565">
    <property type="entry name" value="ARGININOSUCCIN_SYN_2"/>
    <property type="match status" value="1"/>
</dbReference>
<name>ASSY_SYMTH</name>
<protein>
    <recommendedName>
        <fullName evidence="1">Argininosuccinate synthase</fullName>
        <ecNumber evidence="1">6.3.4.5</ecNumber>
    </recommendedName>
    <alternativeName>
        <fullName evidence="1">Citrulline--aspartate ligase</fullName>
    </alternativeName>
</protein>
<keyword id="KW-0028">Amino-acid biosynthesis</keyword>
<keyword id="KW-0055">Arginine biosynthesis</keyword>
<keyword id="KW-0067">ATP-binding</keyword>
<keyword id="KW-0963">Cytoplasm</keyword>
<keyword id="KW-0436">Ligase</keyword>
<keyword id="KW-0547">Nucleotide-binding</keyword>
<keyword id="KW-1185">Reference proteome</keyword>
<organism>
    <name type="scientific">Symbiobacterium thermophilum (strain DSM 24528 / JCM 14929 / IAM 14863 / T)</name>
    <dbReference type="NCBI Taxonomy" id="292459"/>
    <lineage>
        <taxon>Bacteria</taxon>
        <taxon>Bacillati</taxon>
        <taxon>Bacillota</taxon>
        <taxon>Clostridia</taxon>
        <taxon>Eubacteriales</taxon>
        <taxon>Symbiobacteriaceae</taxon>
        <taxon>Symbiobacterium</taxon>
    </lineage>
</organism>
<proteinExistence type="inferred from homology"/>
<feature type="chain" id="PRO_0000148651" description="Argininosuccinate synthase">
    <location>
        <begin position="1"/>
        <end position="401"/>
    </location>
</feature>
<feature type="binding site" evidence="1">
    <location>
        <begin position="9"/>
        <end position="17"/>
    </location>
    <ligand>
        <name>ATP</name>
        <dbReference type="ChEBI" id="CHEBI:30616"/>
    </ligand>
</feature>
<feature type="binding site" evidence="1">
    <location>
        <position position="88"/>
    </location>
    <ligand>
        <name>L-citrulline</name>
        <dbReference type="ChEBI" id="CHEBI:57743"/>
    </ligand>
</feature>
<feature type="binding site" evidence="1">
    <location>
        <position position="118"/>
    </location>
    <ligand>
        <name>ATP</name>
        <dbReference type="ChEBI" id="CHEBI:30616"/>
    </ligand>
</feature>
<feature type="binding site" evidence="1">
    <location>
        <position position="120"/>
    </location>
    <ligand>
        <name>L-aspartate</name>
        <dbReference type="ChEBI" id="CHEBI:29991"/>
    </ligand>
</feature>
<feature type="binding site" evidence="1">
    <location>
        <position position="124"/>
    </location>
    <ligand>
        <name>L-aspartate</name>
        <dbReference type="ChEBI" id="CHEBI:29991"/>
    </ligand>
</feature>
<feature type="binding site" evidence="1">
    <location>
        <position position="124"/>
    </location>
    <ligand>
        <name>L-citrulline</name>
        <dbReference type="ChEBI" id="CHEBI:57743"/>
    </ligand>
</feature>
<feature type="binding site" evidence="1">
    <location>
        <position position="125"/>
    </location>
    <ligand>
        <name>L-aspartate</name>
        <dbReference type="ChEBI" id="CHEBI:29991"/>
    </ligand>
</feature>
<feature type="binding site" evidence="1">
    <location>
        <position position="128"/>
    </location>
    <ligand>
        <name>L-citrulline</name>
        <dbReference type="ChEBI" id="CHEBI:57743"/>
    </ligand>
</feature>
<feature type="binding site" evidence="1">
    <location>
        <position position="176"/>
    </location>
    <ligand>
        <name>L-citrulline</name>
        <dbReference type="ChEBI" id="CHEBI:57743"/>
    </ligand>
</feature>
<feature type="binding site" evidence="1">
    <location>
        <position position="185"/>
    </location>
    <ligand>
        <name>L-citrulline</name>
        <dbReference type="ChEBI" id="CHEBI:57743"/>
    </ligand>
</feature>
<feature type="binding site" evidence="1">
    <location>
        <position position="261"/>
    </location>
    <ligand>
        <name>L-citrulline</name>
        <dbReference type="ChEBI" id="CHEBI:57743"/>
    </ligand>
</feature>
<feature type="binding site" evidence="1">
    <location>
        <position position="273"/>
    </location>
    <ligand>
        <name>L-citrulline</name>
        <dbReference type="ChEBI" id="CHEBI:57743"/>
    </ligand>
</feature>
<evidence type="ECO:0000255" key="1">
    <source>
        <dbReference type="HAMAP-Rule" id="MF_00005"/>
    </source>
</evidence>
<reference key="1">
    <citation type="journal article" date="2004" name="Nucleic Acids Res.">
        <title>Genome sequence of Symbiobacterium thermophilum, an uncultivable bacterium that depends on microbial commensalism.</title>
        <authorList>
            <person name="Ueda K."/>
            <person name="Yamashita A."/>
            <person name="Ishikawa J."/>
            <person name="Shimada M."/>
            <person name="Watsuji T."/>
            <person name="Morimura K."/>
            <person name="Ikeda H."/>
            <person name="Hattori M."/>
            <person name="Beppu T."/>
        </authorList>
    </citation>
    <scope>NUCLEOTIDE SEQUENCE [LARGE SCALE GENOMIC DNA]</scope>
    <source>
        <strain>DSM 24528 / JCM 14929 / IAM 14863 / T</strain>
    </source>
</reference>
<comment type="catalytic activity">
    <reaction evidence="1">
        <text>L-citrulline + L-aspartate + ATP = 2-(N(omega)-L-arginino)succinate + AMP + diphosphate + H(+)</text>
        <dbReference type="Rhea" id="RHEA:10932"/>
        <dbReference type="ChEBI" id="CHEBI:15378"/>
        <dbReference type="ChEBI" id="CHEBI:29991"/>
        <dbReference type="ChEBI" id="CHEBI:30616"/>
        <dbReference type="ChEBI" id="CHEBI:33019"/>
        <dbReference type="ChEBI" id="CHEBI:57472"/>
        <dbReference type="ChEBI" id="CHEBI:57743"/>
        <dbReference type="ChEBI" id="CHEBI:456215"/>
        <dbReference type="EC" id="6.3.4.5"/>
    </reaction>
</comment>
<comment type="pathway">
    <text evidence="1">Amino-acid biosynthesis; L-arginine biosynthesis; L-arginine from L-ornithine and carbamoyl phosphate: step 2/3.</text>
</comment>
<comment type="subunit">
    <text evidence="1">Homotetramer.</text>
</comment>
<comment type="subcellular location">
    <subcellularLocation>
        <location evidence="1">Cytoplasm</location>
    </subcellularLocation>
</comment>
<comment type="similarity">
    <text evidence="1">Belongs to the argininosuccinate synthase family. Type 1 subfamily.</text>
</comment>